<gene>
    <name type="primary">Ars2</name>
    <name type="ORF">GF13819</name>
</gene>
<proteinExistence type="inferred from homology"/>
<sequence length="948" mass="107630">MADSDDEYDRKRRDKFRGERSDSYRTERRDDRRPLGGSGSARDEWSDRNPFRGGASAGGGGGGARHRPDYSDYRGPGPRARYGSPGRDLPPAKRMRPDWGDGDVRPNPRFGGYDPYLMQAWNDHYQSIHSAYSHGSHMPPVRESGGSGGDSLTQPAMLNLKQFLDTQDENISDSEVMRKYTEYKTDFKRQQLNEFFVAHKDEEWFKNKYHPEDSVRRAEEQRGFLKRRTDVFVELLENGTIGSVKVDSVQGDALIRVLDTCVIKLEGGTDEDLKALDEKPKETPVYERKHDPAPVKAVDEVKSPKKETEKEASPVIVSPQRKSVKPLNSDDENWDEEVAAPPKKDVEEEPKALESGSEDKSRRKKSAKRKRVNSGDDSSSESDSSSSSDDEDEEKLKKKYDVEDGLRSEQKAEAEKDKEMQDAKVIEAPESPKEATENSAEEVKASDAAETPAEEAEQEKPEVAEEVNRPKQDQENGDKITTEDGETKSDSEENKVMETETIDLDKVRDGQPRALHRTSSIFLRNLAPSITKAEIEAVCTRFSGYLRVAIADPLVERRWYRRGWITFTRDVNIKEICWSLNNQRLRDCEMGAIVNRDLSRRVRPANGITAHKQVVRSDIKLCAKIILNLDERFRLWPEPTSDDSIPFDRAGESSANGNTSTYGIKSKNPVLQNITDYLIEEASAEEEELLGLTGENKDAEGEPIERDEHLLAVLDRLVLYLRIVHSVDYYNHCEYPYEDEMPNRCGIIHARGPAPSRVTSNDIHEYVKTYESKLQQFLTKTALLSDEETKDLGAKDAETEVEKFVQANTQELAKDKWLCPLSGKKFKGPEFIRKHIFNKHEEKVDEVRKEVQYFNNYLRDPKRPQLPEHPGSSKRPESESGRGGGSGYRPPMYPPFSGMPYGFSPSMMGGGRGGRNFPPVRRELPLEHQRRLIGYHDLDAPANSDMFD</sequence>
<organism>
    <name type="scientific">Drosophila ananassae</name>
    <name type="common">Fruit fly</name>
    <dbReference type="NCBI Taxonomy" id="7217"/>
    <lineage>
        <taxon>Eukaryota</taxon>
        <taxon>Metazoa</taxon>
        <taxon>Ecdysozoa</taxon>
        <taxon>Arthropoda</taxon>
        <taxon>Hexapoda</taxon>
        <taxon>Insecta</taxon>
        <taxon>Pterygota</taxon>
        <taxon>Neoptera</taxon>
        <taxon>Endopterygota</taxon>
        <taxon>Diptera</taxon>
        <taxon>Brachycera</taxon>
        <taxon>Muscomorpha</taxon>
        <taxon>Ephydroidea</taxon>
        <taxon>Drosophilidae</taxon>
        <taxon>Drosophila</taxon>
        <taxon>Sophophora</taxon>
    </lineage>
</organism>
<name>SRRT_DROAN</name>
<evidence type="ECO:0000250" key="1"/>
<evidence type="ECO:0000256" key="2">
    <source>
        <dbReference type="SAM" id="MobiDB-lite"/>
    </source>
</evidence>
<evidence type="ECO:0000305" key="3"/>
<dbReference type="EMBL" id="CH902619">
    <property type="protein sequence ID" value="EDV38163.1"/>
    <property type="molecule type" value="Genomic_DNA"/>
</dbReference>
<dbReference type="SMR" id="B3MJ69"/>
<dbReference type="FunCoup" id="B3MJ69">
    <property type="interactions" value="2427"/>
</dbReference>
<dbReference type="STRING" id="7217.B3MJ69"/>
<dbReference type="EnsemblMetazoa" id="FBtr0118519">
    <property type="protein sequence ID" value="FBpp0117011"/>
    <property type="gene ID" value="FBgn0090846"/>
</dbReference>
<dbReference type="EnsemblMetazoa" id="XM_001961305.3">
    <property type="protein sequence ID" value="XP_001961341.1"/>
    <property type="gene ID" value="LOC6496655"/>
</dbReference>
<dbReference type="GeneID" id="6496655"/>
<dbReference type="KEGG" id="dan:6496655"/>
<dbReference type="CTD" id="35539"/>
<dbReference type="eggNOG" id="KOG2295">
    <property type="taxonomic scope" value="Eukaryota"/>
</dbReference>
<dbReference type="HOGENOM" id="CLU_008560_0_0_1"/>
<dbReference type="InParanoid" id="B3MJ69"/>
<dbReference type="OMA" id="GARDEWS"/>
<dbReference type="OrthoDB" id="342064at2759"/>
<dbReference type="PhylomeDB" id="B3MJ69"/>
<dbReference type="Proteomes" id="UP000007801">
    <property type="component" value="Unassembled WGS sequence"/>
</dbReference>
<dbReference type="GO" id="GO:0016604">
    <property type="term" value="C:nuclear body"/>
    <property type="evidence" value="ECO:0007669"/>
    <property type="project" value="TreeGrafter"/>
</dbReference>
<dbReference type="GO" id="GO:0005654">
    <property type="term" value="C:nucleoplasm"/>
    <property type="evidence" value="ECO:0000250"/>
    <property type="project" value="UniProtKB"/>
</dbReference>
<dbReference type="GO" id="GO:0050829">
    <property type="term" value="P:defense response to Gram-negative bacterium"/>
    <property type="evidence" value="ECO:0007669"/>
    <property type="project" value="EnsemblMetazoa"/>
</dbReference>
<dbReference type="GO" id="GO:0045071">
    <property type="term" value="P:negative regulation of viral genome replication"/>
    <property type="evidence" value="ECO:0007669"/>
    <property type="project" value="EnsemblMetazoa"/>
</dbReference>
<dbReference type="GO" id="GO:0031053">
    <property type="term" value="P:primary miRNA processing"/>
    <property type="evidence" value="ECO:0000250"/>
    <property type="project" value="UniProtKB"/>
</dbReference>
<dbReference type="GO" id="GO:0035194">
    <property type="term" value="P:regulatory ncRNA-mediated post-transcriptional gene silencing"/>
    <property type="evidence" value="ECO:0000250"/>
    <property type="project" value="UniProtKB"/>
</dbReference>
<dbReference type="GO" id="GO:0030422">
    <property type="term" value="P:siRNA processing"/>
    <property type="evidence" value="ECO:0007669"/>
    <property type="project" value="EnsemblMetazoa"/>
</dbReference>
<dbReference type="InterPro" id="IPR039727">
    <property type="entry name" value="SE/Ars2"/>
</dbReference>
<dbReference type="InterPro" id="IPR007042">
    <property type="entry name" value="SERRATE/Ars2_C"/>
</dbReference>
<dbReference type="InterPro" id="IPR021933">
    <property type="entry name" value="SERRATE/Ars2_N"/>
</dbReference>
<dbReference type="PANTHER" id="PTHR13165">
    <property type="entry name" value="ARSENITE-RESISTANCE PROTEIN 2"/>
    <property type="match status" value="1"/>
</dbReference>
<dbReference type="PANTHER" id="PTHR13165:SF0">
    <property type="entry name" value="SERRATE RNA EFFECTOR MOLECULE HOMOLOG"/>
    <property type="match status" value="1"/>
</dbReference>
<dbReference type="Pfam" id="PF04959">
    <property type="entry name" value="ARS2"/>
    <property type="match status" value="1"/>
</dbReference>
<dbReference type="Pfam" id="PF12066">
    <property type="entry name" value="SERRATE_Ars2_N"/>
    <property type="match status" value="1"/>
</dbReference>
<feature type="chain" id="PRO_0000385216" description="Serrate RNA effector molecule homolog">
    <location>
        <begin position="1"/>
        <end position="948"/>
    </location>
</feature>
<feature type="region of interest" description="Disordered" evidence="2">
    <location>
        <begin position="1"/>
        <end position="106"/>
    </location>
</feature>
<feature type="region of interest" description="Disordered" evidence="2">
    <location>
        <begin position="274"/>
        <end position="497"/>
    </location>
</feature>
<feature type="region of interest" description="Disordered" evidence="2">
    <location>
        <begin position="856"/>
        <end position="893"/>
    </location>
</feature>
<feature type="compositionally biased region" description="Basic and acidic residues" evidence="2">
    <location>
        <begin position="8"/>
        <end position="34"/>
    </location>
</feature>
<feature type="compositionally biased region" description="Basic and acidic residues" evidence="2">
    <location>
        <begin position="41"/>
        <end position="50"/>
    </location>
</feature>
<feature type="compositionally biased region" description="Basic and acidic residues" evidence="2">
    <location>
        <begin position="95"/>
        <end position="106"/>
    </location>
</feature>
<feature type="compositionally biased region" description="Basic and acidic residues" evidence="2">
    <location>
        <begin position="274"/>
        <end position="312"/>
    </location>
</feature>
<feature type="compositionally biased region" description="Acidic residues" evidence="2">
    <location>
        <begin position="329"/>
        <end position="338"/>
    </location>
</feature>
<feature type="compositionally biased region" description="Basic and acidic residues" evidence="2">
    <location>
        <begin position="342"/>
        <end position="361"/>
    </location>
</feature>
<feature type="compositionally biased region" description="Basic residues" evidence="2">
    <location>
        <begin position="362"/>
        <end position="372"/>
    </location>
</feature>
<feature type="compositionally biased region" description="Basic and acidic residues" evidence="2">
    <location>
        <begin position="394"/>
        <end position="447"/>
    </location>
</feature>
<feature type="compositionally biased region" description="Basic and acidic residues" evidence="2">
    <location>
        <begin position="458"/>
        <end position="497"/>
    </location>
</feature>
<feature type="modified residue" description="Phosphotyrosine" evidence="1">
    <location>
        <position position="82"/>
    </location>
</feature>
<feature type="modified residue" description="Phosphoserine" evidence="1">
    <location>
        <position position="84"/>
    </location>
</feature>
<feature type="modified residue" description="Phosphoserine" evidence="1">
    <location>
        <position position="329"/>
    </location>
</feature>
<feature type="modified residue" description="Phosphoserine" evidence="1">
    <location>
        <position position="431"/>
    </location>
</feature>
<feature type="modified residue" description="Phosphoserine" evidence="1">
    <location>
        <position position="644"/>
    </location>
</feature>
<accession>B3MJ69</accession>
<reference key="1">
    <citation type="journal article" date="2007" name="Nature">
        <title>Evolution of genes and genomes on the Drosophila phylogeny.</title>
        <authorList>
            <consortium name="Drosophila 12 genomes consortium"/>
        </authorList>
    </citation>
    <scope>NUCLEOTIDE SEQUENCE [LARGE SCALE GENOMIC DNA]</scope>
    <source>
        <strain>Tucson 14024-0371.13</strain>
    </source>
</reference>
<comment type="function">
    <text evidence="1">Acts as a mediator between the cap-binding complex (CBC) and RNA-mediated gene silencing (RNAi). Involved in innate immunity via the short interfering RNAs (siRNAs) processing machinery by restricting the viral RNA production. Also involved microRNA (miRNA)-mediated silencing by contributing to the stability and delivery of primary miRNA transcripts to the primary miRNA processing complex containing drosha and pasha (By similarity).</text>
</comment>
<comment type="subunit">
    <text evidence="1">Interacts with cbp20, Dcr-2 and pasha.</text>
</comment>
<comment type="subcellular location">
    <subcellularLocation>
        <location evidence="1">Nucleus</location>
    </subcellularLocation>
</comment>
<comment type="similarity">
    <text evidence="3">Belongs to the ARS2 family.</text>
</comment>
<protein>
    <recommendedName>
        <fullName>Serrate RNA effector molecule homolog</fullName>
    </recommendedName>
    <alternativeName>
        <fullName>Arsenite-resistance protein 2 homolog</fullName>
    </alternativeName>
</protein>
<keyword id="KW-0539">Nucleus</keyword>
<keyword id="KW-0597">Phosphoprotein</keyword>
<keyword id="KW-1185">Reference proteome</keyword>
<keyword id="KW-0943">RNA-mediated gene silencing</keyword>